<dbReference type="EMBL" id="AL132970">
    <property type="protein sequence ID" value="CAB82706.1"/>
    <property type="molecule type" value="Genomic_DNA"/>
</dbReference>
<dbReference type="EMBL" id="CP002686">
    <property type="protein sequence ID" value="AEE79341.1"/>
    <property type="molecule type" value="Genomic_DNA"/>
</dbReference>
<dbReference type="EMBL" id="AK228550">
    <property type="protein sequence ID" value="BAF00471.1"/>
    <property type="molecule type" value="mRNA"/>
</dbReference>
<dbReference type="PIR" id="T47650">
    <property type="entry name" value="T47650"/>
</dbReference>
<dbReference type="RefSeq" id="NP_191071.1">
    <property type="nucleotide sequence ID" value="NM_115369.4"/>
</dbReference>
<dbReference type="SMR" id="Q9M2V5"/>
<dbReference type="FunCoup" id="Q9M2V5">
    <property type="interactions" value="72"/>
</dbReference>
<dbReference type="STRING" id="3702.Q9M2V5"/>
<dbReference type="iPTMnet" id="Q9M2V5"/>
<dbReference type="PaxDb" id="3702-AT3G55110.1"/>
<dbReference type="ProteomicsDB" id="245095"/>
<dbReference type="EnsemblPlants" id="AT3G55110.1">
    <property type="protein sequence ID" value="AT3G55110.1"/>
    <property type="gene ID" value="AT3G55110"/>
</dbReference>
<dbReference type="GeneID" id="824677"/>
<dbReference type="Gramene" id="AT3G55110.1">
    <property type="protein sequence ID" value="AT3G55110.1"/>
    <property type="gene ID" value="AT3G55110"/>
</dbReference>
<dbReference type="KEGG" id="ath:AT3G55110"/>
<dbReference type="Araport" id="AT3G55110"/>
<dbReference type="TAIR" id="AT3G55110">
    <property type="gene designation" value="ABCG18"/>
</dbReference>
<dbReference type="eggNOG" id="KOG0061">
    <property type="taxonomic scope" value="Eukaryota"/>
</dbReference>
<dbReference type="HOGENOM" id="CLU_000604_57_8_1"/>
<dbReference type="InParanoid" id="Q9M2V5"/>
<dbReference type="OMA" id="NEKWQHN"/>
<dbReference type="OrthoDB" id="66620at2759"/>
<dbReference type="PhylomeDB" id="Q9M2V5"/>
<dbReference type="PRO" id="PR:Q9M2V5"/>
<dbReference type="Proteomes" id="UP000006548">
    <property type="component" value="Chromosome 3"/>
</dbReference>
<dbReference type="ExpressionAtlas" id="Q9M2V5">
    <property type="expression patterns" value="baseline and differential"/>
</dbReference>
<dbReference type="GO" id="GO:0016020">
    <property type="term" value="C:membrane"/>
    <property type="evidence" value="ECO:0007669"/>
    <property type="project" value="UniProtKB-SubCell"/>
</dbReference>
<dbReference type="GO" id="GO:0140359">
    <property type="term" value="F:ABC-type transporter activity"/>
    <property type="evidence" value="ECO:0007669"/>
    <property type="project" value="InterPro"/>
</dbReference>
<dbReference type="GO" id="GO:0005524">
    <property type="term" value="F:ATP binding"/>
    <property type="evidence" value="ECO:0007669"/>
    <property type="project" value="UniProtKB-KW"/>
</dbReference>
<dbReference type="GO" id="GO:0016887">
    <property type="term" value="F:ATP hydrolysis activity"/>
    <property type="evidence" value="ECO:0007669"/>
    <property type="project" value="InterPro"/>
</dbReference>
<dbReference type="CDD" id="cd03213">
    <property type="entry name" value="ABCG_EPDR"/>
    <property type="match status" value="1"/>
</dbReference>
<dbReference type="FunFam" id="3.40.50.300:FF:000530">
    <property type="entry name" value="ABC transporter G family member 6"/>
    <property type="match status" value="1"/>
</dbReference>
<dbReference type="Gene3D" id="3.40.50.300">
    <property type="entry name" value="P-loop containing nucleotide triphosphate hydrolases"/>
    <property type="match status" value="1"/>
</dbReference>
<dbReference type="InterPro" id="IPR003593">
    <property type="entry name" value="AAA+_ATPase"/>
</dbReference>
<dbReference type="InterPro" id="IPR013525">
    <property type="entry name" value="ABC2_TM"/>
</dbReference>
<dbReference type="InterPro" id="IPR003439">
    <property type="entry name" value="ABC_transporter-like_ATP-bd"/>
</dbReference>
<dbReference type="InterPro" id="IPR017871">
    <property type="entry name" value="ABC_transporter-like_CS"/>
</dbReference>
<dbReference type="InterPro" id="IPR050352">
    <property type="entry name" value="ABCG_transporters"/>
</dbReference>
<dbReference type="InterPro" id="IPR027417">
    <property type="entry name" value="P-loop_NTPase"/>
</dbReference>
<dbReference type="PANTHER" id="PTHR48041:SF69">
    <property type="entry name" value="ABC TRANSPORTER G FAMILY MEMBER 17-RELATED"/>
    <property type="match status" value="1"/>
</dbReference>
<dbReference type="PANTHER" id="PTHR48041">
    <property type="entry name" value="ABC TRANSPORTER G FAMILY MEMBER 28"/>
    <property type="match status" value="1"/>
</dbReference>
<dbReference type="Pfam" id="PF01061">
    <property type="entry name" value="ABC2_membrane"/>
    <property type="match status" value="1"/>
</dbReference>
<dbReference type="Pfam" id="PF00005">
    <property type="entry name" value="ABC_tran"/>
    <property type="match status" value="1"/>
</dbReference>
<dbReference type="SMART" id="SM00382">
    <property type="entry name" value="AAA"/>
    <property type="match status" value="1"/>
</dbReference>
<dbReference type="SUPFAM" id="SSF52540">
    <property type="entry name" value="P-loop containing nucleoside triphosphate hydrolases"/>
    <property type="match status" value="1"/>
</dbReference>
<dbReference type="PROSITE" id="PS00211">
    <property type="entry name" value="ABC_TRANSPORTER_1"/>
    <property type="match status" value="1"/>
</dbReference>
<dbReference type="PROSITE" id="PS50893">
    <property type="entry name" value="ABC_TRANSPORTER_2"/>
    <property type="match status" value="1"/>
</dbReference>
<sequence>MPRVSAEILDISHTGGNESPTLGELLKDFNDSGRKKYPGENAPTQHILDLAPAAETRSVPFLLSFNNLSYNVVLRRRFDFSRRKTASVKTLLDDITGEARDGEILAVLGGSGAGKSTLIDALAGRVAEDSLKGTVTLNGEKVLQSRLLKVISAYVMQDDLLFPMLTVKETLMFASEFRLPRSLPKSKKMERVETLIDQLGLRNAADTVIGDEGHRGVSGGERRRVSIGIDIIHDPILLFLDEPTSGLDSTNAFMVVQVLKRIAQSGSVVIMSIHQPSARIIGLLDRLIILSHGKSVFNGSPVSLPSFFSSFGRPIPEKENITEFALDVIRELEGSSEGTRDLVEFNEKWQQNQTARATTQSRVSLKEAIAASVSRGKLVSGSSGANPISMETVSSYANPPLAETFILAKRYIKNWIRTPELIGMRIGTVMVTGLLLATVYWRLDNTPRGAQERMGFFAFGMSTMFYCCADNIPVFIQERYIFLRETTHNAYRTSSYVISHALVSLPQLLALSIAFAATTFWTVGLSGGLESFFYYCLIIYAAFWSGSSIVTFISGLIPNVMMSYMVTIAYLSYCLLLGGFYINRDRIPLYWIWFHYISLLKYPYEAVLINEFDDPSRCFVKGVQVFDGTLLAEVSHVMKVKLLDTLSGSLGTKITESTCLRTGPDLLMQQGITQLSKWDCLWITLAWGLFFRILFYLSLLFGSKNKRT</sequence>
<evidence type="ECO:0000250" key="1"/>
<evidence type="ECO:0000255" key="2"/>
<evidence type="ECO:0000255" key="3">
    <source>
        <dbReference type="PROSITE-ProRule" id="PRU00434"/>
    </source>
</evidence>
<evidence type="ECO:0000305" key="4"/>
<accession>Q9M2V5</accession>
<accession>Q0WQX8</accession>
<protein>
    <recommendedName>
        <fullName>ABC transporter G family member 18</fullName>
        <shortName>ABC transporter ABCG.18</shortName>
        <shortName>AtABCG18</shortName>
    </recommendedName>
    <alternativeName>
        <fullName>Probable white-brown complex homolog protein 18</fullName>
        <shortName>AtWBC18</shortName>
    </alternativeName>
</protein>
<gene>
    <name type="primary">ABCG18</name>
    <name type="synonym">WBC18</name>
    <name type="ordered locus">At3g55110</name>
    <name type="ORF">T15C9.110</name>
</gene>
<proteinExistence type="evidence at transcript level"/>
<reference key="1">
    <citation type="journal article" date="2000" name="Nature">
        <title>Sequence and analysis of chromosome 3 of the plant Arabidopsis thaliana.</title>
        <authorList>
            <person name="Salanoubat M."/>
            <person name="Lemcke K."/>
            <person name="Rieger M."/>
            <person name="Ansorge W."/>
            <person name="Unseld M."/>
            <person name="Fartmann B."/>
            <person name="Valle G."/>
            <person name="Bloecker H."/>
            <person name="Perez-Alonso M."/>
            <person name="Obermaier B."/>
            <person name="Delseny M."/>
            <person name="Boutry M."/>
            <person name="Grivell L.A."/>
            <person name="Mache R."/>
            <person name="Puigdomenech P."/>
            <person name="De Simone V."/>
            <person name="Choisne N."/>
            <person name="Artiguenave F."/>
            <person name="Robert C."/>
            <person name="Brottier P."/>
            <person name="Wincker P."/>
            <person name="Cattolico L."/>
            <person name="Weissenbach J."/>
            <person name="Saurin W."/>
            <person name="Quetier F."/>
            <person name="Schaefer M."/>
            <person name="Mueller-Auer S."/>
            <person name="Gabel C."/>
            <person name="Fuchs M."/>
            <person name="Benes V."/>
            <person name="Wurmbach E."/>
            <person name="Drzonek H."/>
            <person name="Erfle H."/>
            <person name="Jordan N."/>
            <person name="Bangert S."/>
            <person name="Wiedelmann R."/>
            <person name="Kranz H."/>
            <person name="Voss H."/>
            <person name="Holland R."/>
            <person name="Brandt P."/>
            <person name="Nyakatura G."/>
            <person name="Vezzi A."/>
            <person name="D'Angelo M."/>
            <person name="Pallavicini A."/>
            <person name="Toppo S."/>
            <person name="Simionati B."/>
            <person name="Conrad A."/>
            <person name="Hornischer K."/>
            <person name="Kauer G."/>
            <person name="Loehnert T.-H."/>
            <person name="Nordsiek G."/>
            <person name="Reichelt J."/>
            <person name="Scharfe M."/>
            <person name="Schoen O."/>
            <person name="Bargues M."/>
            <person name="Terol J."/>
            <person name="Climent J."/>
            <person name="Navarro P."/>
            <person name="Collado C."/>
            <person name="Perez-Perez A."/>
            <person name="Ottenwaelder B."/>
            <person name="Duchemin D."/>
            <person name="Cooke R."/>
            <person name="Laudie M."/>
            <person name="Berger-Llauro C."/>
            <person name="Purnelle B."/>
            <person name="Masuy D."/>
            <person name="de Haan M."/>
            <person name="Maarse A.C."/>
            <person name="Alcaraz J.-P."/>
            <person name="Cottet A."/>
            <person name="Casacuberta E."/>
            <person name="Monfort A."/>
            <person name="Argiriou A."/>
            <person name="Flores M."/>
            <person name="Liguori R."/>
            <person name="Vitale D."/>
            <person name="Mannhaupt G."/>
            <person name="Haase D."/>
            <person name="Schoof H."/>
            <person name="Rudd S."/>
            <person name="Zaccaria P."/>
            <person name="Mewes H.-W."/>
            <person name="Mayer K.F.X."/>
            <person name="Kaul S."/>
            <person name="Town C.D."/>
            <person name="Koo H.L."/>
            <person name="Tallon L.J."/>
            <person name="Jenkins J."/>
            <person name="Rooney T."/>
            <person name="Rizzo M."/>
            <person name="Walts A."/>
            <person name="Utterback T."/>
            <person name="Fujii C.Y."/>
            <person name="Shea T.P."/>
            <person name="Creasy T.H."/>
            <person name="Haas B."/>
            <person name="Maiti R."/>
            <person name="Wu D."/>
            <person name="Peterson J."/>
            <person name="Van Aken S."/>
            <person name="Pai G."/>
            <person name="Militscher J."/>
            <person name="Sellers P."/>
            <person name="Gill J.E."/>
            <person name="Feldblyum T.V."/>
            <person name="Preuss D."/>
            <person name="Lin X."/>
            <person name="Nierman W.C."/>
            <person name="Salzberg S.L."/>
            <person name="White O."/>
            <person name="Venter J.C."/>
            <person name="Fraser C.M."/>
            <person name="Kaneko T."/>
            <person name="Nakamura Y."/>
            <person name="Sato S."/>
            <person name="Kato T."/>
            <person name="Asamizu E."/>
            <person name="Sasamoto S."/>
            <person name="Kimura T."/>
            <person name="Idesawa K."/>
            <person name="Kawashima K."/>
            <person name="Kishida Y."/>
            <person name="Kiyokawa C."/>
            <person name="Kohara M."/>
            <person name="Matsumoto M."/>
            <person name="Matsuno A."/>
            <person name="Muraki A."/>
            <person name="Nakayama S."/>
            <person name="Nakazaki N."/>
            <person name="Shinpo S."/>
            <person name="Takeuchi C."/>
            <person name="Wada T."/>
            <person name="Watanabe A."/>
            <person name="Yamada M."/>
            <person name="Yasuda M."/>
            <person name="Tabata S."/>
        </authorList>
    </citation>
    <scope>NUCLEOTIDE SEQUENCE [LARGE SCALE GENOMIC DNA]</scope>
    <source>
        <strain>cv. Columbia</strain>
    </source>
</reference>
<reference key="2">
    <citation type="journal article" date="2017" name="Plant J.">
        <title>Araport11: a complete reannotation of the Arabidopsis thaliana reference genome.</title>
        <authorList>
            <person name="Cheng C.Y."/>
            <person name="Krishnakumar V."/>
            <person name="Chan A.P."/>
            <person name="Thibaud-Nissen F."/>
            <person name="Schobel S."/>
            <person name="Town C.D."/>
        </authorList>
    </citation>
    <scope>GENOME REANNOTATION</scope>
    <source>
        <strain>cv. Columbia</strain>
    </source>
</reference>
<reference key="3">
    <citation type="submission" date="2006-07" db="EMBL/GenBank/DDBJ databases">
        <title>Large-scale analysis of RIKEN Arabidopsis full-length (RAFL) cDNAs.</title>
        <authorList>
            <person name="Totoki Y."/>
            <person name="Seki M."/>
            <person name="Ishida J."/>
            <person name="Nakajima M."/>
            <person name="Enju A."/>
            <person name="Kamiya A."/>
            <person name="Narusaka M."/>
            <person name="Shin-i T."/>
            <person name="Nakagawa M."/>
            <person name="Sakamoto N."/>
            <person name="Oishi K."/>
            <person name="Kohara Y."/>
            <person name="Kobayashi M."/>
            <person name="Toyoda A."/>
            <person name="Sakaki Y."/>
            <person name="Sakurai T."/>
            <person name="Iida K."/>
            <person name="Akiyama K."/>
            <person name="Satou M."/>
            <person name="Toyoda T."/>
            <person name="Konagaya A."/>
            <person name="Carninci P."/>
            <person name="Kawai J."/>
            <person name="Hayashizaki Y."/>
            <person name="Shinozaki K."/>
        </authorList>
    </citation>
    <scope>NUCLEOTIDE SEQUENCE [LARGE SCALE MRNA]</scope>
    <source>
        <strain>cv. Columbia</strain>
    </source>
</reference>
<reference key="4">
    <citation type="journal article" date="2001" name="J. Biol. Chem.">
        <title>The Arabidopsis thaliana ABC protein superfamily, a complete inventory.</title>
        <authorList>
            <person name="Sanchez-Fernandez R."/>
            <person name="Davies T.G."/>
            <person name="Coleman J.O."/>
            <person name="Rea P.A."/>
        </authorList>
    </citation>
    <scope>GENE FAMILY</scope>
    <scope>NOMENCLATURE</scope>
</reference>
<reference key="5">
    <citation type="journal article" date="2008" name="Trends Plant Sci.">
        <title>Plant ABC proteins - a unified nomenclature and updated inventory.</title>
        <authorList>
            <person name="Verrier P.J."/>
            <person name="Bird D."/>
            <person name="Burla B."/>
            <person name="Dassa E."/>
            <person name="Forestier C."/>
            <person name="Geisler M."/>
            <person name="Klein M."/>
            <person name="Kolukisaoglu H.U."/>
            <person name="Lee Y."/>
            <person name="Martinoia E."/>
            <person name="Murphy A."/>
            <person name="Rea P.A."/>
            <person name="Samuels L."/>
            <person name="Schulz B."/>
            <person name="Spalding E.J."/>
            <person name="Yazaki K."/>
            <person name="Theodoulou F.L."/>
        </authorList>
    </citation>
    <scope>GENE FAMILY</scope>
    <scope>NOMENCLATURE</scope>
</reference>
<comment type="subcellular location">
    <subcellularLocation>
        <location evidence="1">Membrane</location>
        <topology evidence="1">Multi-pass membrane protein</topology>
    </subcellularLocation>
</comment>
<comment type="similarity">
    <text evidence="4">Belongs to the ABC transporter superfamily. ABCG family. Eye pigment precursor importer (TC 3.A.1.204) subfamily.</text>
</comment>
<organism>
    <name type="scientific">Arabidopsis thaliana</name>
    <name type="common">Mouse-ear cress</name>
    <dbReference type="NCBI Taxonomy" id="3702"/>
    <lineage>
        <taxon>Eukaryota</taxon>
        <taxon>Viridiplantae</taxon>
        <taxon>Streptophyta</taxon>
        <taxon>Embryophyta</taxon>
        <taxon>Tracheophyta</taxon>
        <taxon>Spermatophyta</taxon>
        <taxon>Magnoliopsida</taxon>
        <taxon>eudicotyledons</taxon>
        <taxon>Gunneridae</taxon>
        <taxon>Pentapetalae</taxon>
        <taxon>rosids</taxon>
        <taxon>malvids</taxon>
        <taxon>Brassicales</taxon>
        <taxon>Brassicaceae</taxon>
        <taxon>Camelineae</taxon>
        <taxon>Arabidopsis</taxon>
    </lineage>
</organism>
<keyword id="KW-0067">ATP-binding</keyword>
<keyword id="KW-0472">Membrane</keyword>
<keyword id="KW-0547">Nucleotide-binding</keyword>
<keyword id="KW-1185">Reference proteome</keyword>
<keyword id="KW-0812">Transmembrane</keyword>
<keyword id="KW-1133">Transmembrane helix</keyword>
<keyword id="KW-0813">Transport</keyword>
<feature type="chain" id="PRO_0000240690" description="ABC transporter G family member 18">
    <location>
        <begin position="1"/>
        <end position="708"/>
    </location>
</feature>
<feature type="transmembrane region" description="Helical" evidence="2">
    <location>
        <begin position="421"/>
        <end position="441"/>
    </location>
</feature>
<feature type="transmembrane region" description="Helical" evidence="2">
    <location>
        <begin position="456"/>
        <end position="476"/>
    </location>
</feature>
<feature type="transmembrane region" description="Helical" evidence="2">
    <location>
        <begin position="508"/>
        <end position="528"/>
    </location>
</feature>
<feature type="transmembrane region" description="Helical" evidence="2">
    <location>
        <begin position="537"/>
        <end position="557"/>
    </location>
</feature>
<feature type="transmembrane region" description="Helical" evidence="2">
    <location>
        <begin position="560"/>
        <end position="580"/>
    </location>
</feature>
<feature type="transmembrane region" description="Helical" evidence="2">
    <location>
        <begin position="589"/>
        <end position="609"/>
    </location>
</feature>
<feature type="transmembrane region" description="Helical" evidence="2">
    <location>
        <begin position="681"/>
        <end position="701"/>
    </location>
</feature>
<feature type="domain" description="ABC transporter" evidence="3">
    <location>
        <begin position="75"/>
        <end position="317"/>
    </location>
</feature>
<feature type="domain" description="ABC transmembrane type-2">
    <location>
        <begin position="402"/>
        <end position="612"/>
    </location>
</feature>
<feature type="binding site" evidence="3">
    <location>
        <begin position="109"/>
        <end position="116"/>
    </location>
    <ligand>
        <name>ATP</name>
        <dbReference type="ChEBI" id="CHEBI:30616"/>
    </ligand>
</feature>
<feature type="sequence conflict" description="In Ref. 3; BAF00471." evidence="4" ref="3">
    <original>I</original>
    <variation>V</variation>
    <location>
        <position position="538"/>
    </location>
</feature>
<name>AB18G_ARATH</name>